<keyword id="KW-0687">Ribonucleoprotein</keyword>
<keyword id="KW-0689">Ribosomal protein</keyword>
<keyword id="KW-0694">RNA-binding</keyword>
<keyword id="KW-0699">rRNA-binding</keyword>
<dbReference type="EMBL" id="CP000381">
    <property type="protein sequence ID" value="ABX73408.1"/>
    <property type="molecule type" value="Genomic_DNA"/>
</dbReference>
<dbReference type="RefSeq" id="WP_012221738.1">
    <property type="nucleotide sequence ID" value="NC_010120.1"/>
</dbReference>
<dbReference type="SMR" id="A9LZQ0"/>
<dbReference type="KEGG" id="nmn:NMCC_1235"/>
<dbReference type="HOGENOM" id="CLU_078938_4_1_4"/>
<dbReference type="Proteomes" id="UP000001177">
    <property type="component" value="Chromosome"/>
</dbReference>
<dbReference type="GO" id="GO:1990904">
    <property type="term" value="C:ribonucleoprotein complex"/>
    <property type="evidence" value="ECO:0007669"/>
    <property type="project" value="UniProtKB-KW"/>
</dbReference>
<dbReference type="GO" id="GO:0005840">
    <property type="term" value="C:ribosome"/>
    <property type="evidence" value="ECO:0007669"/>
    <property type="project" value="UniProtKB-KW"/>
</dbReference>
<dbReference type="GO" id="GO:0019843">
    <property type="term" value="F:rRNA binding"/>
    <property type="evidence" value="ECO:0007669"/>
    <property type="project" value="UniProtKB-UniRule"/>
</dbReference>
<dbReference type="GO" id="GO:0003735">
    <property type="term" value="F:structural constituent of ribosome"/>
    <property type="evidence" value="ECO:0007669"/>
    <property type="project" value="InterPro"/>
</dbReference>
<dbReference type="GO" id="GO:0006412">
    <property type="term" value="P:translation"/>
    <property type="evidence" value="ECO:0007669"/>
    <property type="project" value="UniProtKB-UniRule"/>
</dbReference>
<dbReference type="FunFam" id="3.10.430.100:FF:000010">
    <property type="entry name" value="50S ribosomal protein L9"/>
    <property type="match status" value="1"/>
</dbReference>
<dbReference type="Gene3D" id="3.10.430.100">
    <property type="entry name" value="Ribosomal protein L9, C-terminal domain"/>
    <property type="match status" value="1"/>
</dbReference>
<dbReference type="Gene3D" id="3.40.5.10">
    <property type="entry name" value="Ribosomal protein L9, N-terminal domain"/>
    <property type="match status" value="1"/>
</dbReference>
<dbReference type="HAMAP" id="MF_00503">
    <property type="entry name" value="Ribosomal_bL9"/>
    <property type="match status" value="1"/>
</dbReference>
<dbReference type="InterPro" id="IPR000244">
    <property type="entry name" value="Ribosomal_bL9"/>
</dbReference>
<dbReference type="InterPro" id="IPR009027">
    <property type="entry name" value="Ribosomal_bL9/RNase_H1_N"/>
</dbReference>
<dbReference type="InterPro" id="IPR020594">
    <property type="entry name" value="Ribosomal_bL9_bac/chp"/>
</dbReference>
<dbReference type="InterPro" id="IPR020069">
    <property type="entry name" value="Ribosomal_bL9_C"/>
</dbReference>
<dbReference type="InterPro" id="IPR036791">
    <property type="entry name" value="Ribosomal_bL9_C_sf"/>
</dbReference>
<dbReference type="InterPro" id="IPR020070">
    <property type="entry name" value="Ribosomal_bL9_N"/>
</dbReference>
<dbReference type="InterPro" id="IPR036935">
    <property type="entry name" value="Ribosomal_bL9_N_sf"/>
</dbReference>
<dbReference type="NCBIfam" id="TIGR00158">
    <property type="entry name" value="L9"/>
    <property type="match status" value="1"/>
</dbReference>
<dbReference type="PANTHER" id="PTHR21368">
    <property type="entry name" value="50S RIBOSOMAL PROTEIN L9"/>
    <property type="match status" value="1"/>
</dbReference>
<dbReference type="Pfam" id="PF03948">
    <property type="entry name" value="Ribosomal_L9_C"/>
    <property type="match status" value="1"/>
</dbReference>
<dbReference type="Pfam" id="PF01281">
    <property type="entry name" value="Ribosomal_L9_N"/>
    <property type="match status" value="1"/>
</dbReference>
<dbReference type="SUPFAM" id="SSF55658">
    <property type="entry name" value="L9 N-domain-like"/>
    <property type="match status" value="1"/>
</dbReference>
<dbReference type="SUPFAM" id="SSF55653">
    <property type="entry name" value="Ribosomal protein L9 C-domain"/>
    <property type="match status" value="1"/>
</dbReference>
<dbReference type="PROSITE" id="PS00651">
    <property type="entry name" value="RIBOSOMAL_L9"/>
    <property type="match status" value="1"/>
</dbReference>
<comment type="function">
    <text evidence="1">Binds to the 23S rRNA.</text>
</comment>
<comment type="similarity">
    <text evidence="1">Belongs to the bacterial ribosomal protein bL9 family.</text>
</comment>
<accession>A9LZQ0</accession>
<gene>
    <name evidence="1" type="primary">rplI</name>
    <name type="ordered locus">NMCC_1235</name>
</gene>
<sequence length="150" mass="15719">MQIILLEKIGGLGNLGDIVTVKNGYARNFLIPAGKAKRATEANMKEFEARRAELEAKQAEILADARARQEKLDGQTVTVAQKAGVDGRLFGSVTNADIAAAIVAAGIEAVKANVRLPNGPLKAVGEYEVEVALHTDAVAKITVAVVAATE</sequence>
<protein>
    <recommendedName>
        <fullName evidence="1">Large ribosomal subunit protein bL9</fullName>
    </recommendedName>
    <alternativeName>
        <fullName evidence="2">50S ribosomal protein L9</fullName>
    </alternativeName>
</protein>
<feature type="chain" id="PRO_1000081488" description="Large ribosomal subunit protein bL9">
    <location>
        <begin position="1"/>
        <end position="150"/>
    </location>
</feature>
<organism>
    <name type="scientific">Neisseria meningitidis serogroup C (strain 053442)</name>
    <dbReference type="NCBI Taxonomy" id="374833"/>
    <lineage>
        <taxon>Bacteria</taxon>
        <taxon>Pseudomonadati</taxon>
        <taxon>Pseudomonadota</taxon>
        <taxon>Betaproteobacteria</taxon>
        <taxon>Neisseriales</taxon>
        <taxon>Neisseriaceae</taxon>
        <taxon>Neisseria</taxon>
    </lineage>
</organism>
<name>RL9_NEIM0</name>
<reference key="1">
    <citation type="journal article" date="2008" name="Genomics">
        <title>Characterization of ST-4821 complex, a unique Neisseria meningitidis clone.</title>
        <authorList>
            <person name="Peng J."/>
            <person name="Yang L."/>
            <person name="Yang F."/>
            <person name="Yang J."/>
            <person name="Yan Y."/>
            <person name="Nie H."/>
            <person name="Zhang X."/>
            <person name="Xiong Z."/>
            <person name="Jiang Y."/>
            <person name="Cheng F."/>
            <person name="Xu X."/>
            <person name="Chen S."/>
            <person name="Sun L."/>
            <person name="Li W."/>
            <person name="Shen Y."/>
            <person name="Shao Z."/>
            <person name="Liang X."/>
            <person name="Xu J."/>
            <person name="Jin Q."/>
        </authorList>
    </citation>
    <scope>NUCLEOTIDE SEQUENCE [LARGE SCALE GENOMIC DNA]</scope>
    <source>
        <strain>053442</strain>
    </source>
</reference>
<evidence type="ECO:0000255" key="1">
    <source>
        <dbReference type="HAMAP-Rule" id="MF_00503"/>
    </source>
</evidence>
<evidence type="ECO:0000305" key="2"/>
<proteinExistence type="inferred from homology"/>